<keyword id="KW-0325">Glycoprotein</keyword>
<keyword id="KW-0472">Membrane</keyword>
<keyword id="KW-1267">Proteomics identification</keyword>
<keyword id="KW-1185">Reference proteome</keyword>
<keyword id="KW-0812">Transmembrane</keyword>
<keyword id="KW-1133">Transmembrane helix</keyword>
<reference key="1">
    <citation type="journal article" date="2006" name="Nature">
        <title>The finished DNA sequence of human chromosome 12.</title>
        <authorList>
            <person name="Scherer S.E."/>
            <person name="Muzny D.M."/>
            <person name="Buhay C.J."/>
            <person name="Chen R."/>
            <person name="Cree A."/>
            <person name="Ding Y."/>
            <person name="Dugan-Rocha S."/>
            <person name="Gill R."/>
            <person name="Gunaratne P."/>
            <person name="Harris R.A."/>
            <person name="Hawes A.C."/>
            <person name="Hernandez J."/>
            <person name="Hodgson A.V."/>
            <person name="Hume J."/>
            <person name="Jackson A."/>
            <person name="Khan Z.M."/>
            <person name="Kovar-Smith C."/>
            <person name="Lewis L.R."/>
            <person name="Lozado R.J."/>
            <person name="Metzker M.L."/>
            <person name="Milosavljevic A."/>
            <person name="Miner G.R."/>
            <person name="Montgomery K.T."/>
            <person name="Morgan M.B."/>
            <person name="Nazareth L.V."/>
            <person name="Scott G."/>
            <person name="Sodergren E."/>
            <person name="Song X.-Z."/>
            <person name="Steffen D."/>
            <person name="Lovering R.C."/>
            <person name="Wheeler D.A."/>
            <person name="Worley K.C."/>
            <person name="Yuan Y."/>
            <person name="Zhang Z."/>
            <person name="Adams C.Q."/>
            <person name="Ansari-Lari M.A."/>
            <person name="Ayele M."/>
            <person name="Brown M.J."/>
            <person name="Chen G."/>
            <person name="Chen Z."/>
            <person name="Clerc-Blankenburg K.P."/>
            <person name="Davis C."/>
            <person name="Delgado O."/>
            <person name="Dinh H.H."/>
            <person name="Draper H."/>
            <person name="Gonzalez-Garay M.L."/>
            <person name="Havlak P."/>
            <person name="Jackson L.R."/>
            <person name="Jacob L.S."/>
            <person name="Kelly S.H."/>
            <person name="Li L."/>
            <person name="Li Z."/>
            <person name="Liu J."/>
            <person name="Liu W."/>
            <person name="Lu J."/>
            <person name="Maheshwari M."/>
            <person name="Nguyen B.-V."/>
            <person name="Okwuonu G.O."/>
            <person name="Pasternak S."/>
            <person name="Perez L.M."/>
            <person name="Plopper F.J.H."/>
            <person name="Santibanez J."/>
            <person name="Shen H."/>
            <person name="Tabor P.E."/>
            <person name="Verduzco D."/>
            <person name="Waldron L."/>
            <person name="Wang Q."/>
            <person name="Williams G.A."/>
            <person name="Zhang J."/>
            <person name="Zhou J."/>
            <person name="Allen C.C."/>
            <person name="Amin A.G."/>
            <person name="Anyalebechi V."/>
            <person name="Bailey M."/>
            <person name="Barbaria J.A."/>
            <person name="Bimage K.E."/>
            <person name="Bryant N.P."/>
            <person name="Burch P.E."/>
            <person name="Burkett C.E."/>
            <person name="Burrell K.L."/>
            <person name="Calderon E."/>
            <person name="Cardenas V."/>
            <person name="Carter K."/>
            <person name="Casias K."/>
            <person name="Cavazos I."/>
            <person name="Cavazos S.R."/>
            <person name="Ceasar H."/>
            <person name="Chacko J."/>
            <person name="Chan S.N."/>
            <person name="Chavez D."/>
            <person name="Christopoulos C."/>
            <person name="Chu J."/>
            <person name="Cockrell R."/>
            <person name="Cox C.D."/>
            <person name="Dang M."/>
            <person name="Dathorne S.R."/>
            <person name="David R."/>
            <person name="Davis C.M."/>
            <person name="Davy-Carroll L."/>
            <person name="Deshazo D.R."/>
            <person name="Donlin J.E."/>
            <person name="D'Souza L."/>
            <person name="Eaves K.A."/>
            <person name="Egan A."/>
            <person name="Emery-Cohen A.J."/>
            <person name="Escotto M."/>
            <person name="Flagg N."/>
            <person name="Forbes L.D."/>
            <person name="Gabisi A.M."/>
            <person name="Garza M."/>
            <person name="Hamilton C."/>
            <person name="Henderson N."/>
            <person name="Hernandez O."/>
            <person name="Hines S."/>
            <person name="Hogues M.E."/>
            <person name="Huang M."/>
            <person name="Idlebird D.G."/>
            <person name="Johnson R."/>
            <person name="Jolivet A."/>
            <person name="Jones S."/>
            <person name="Kagan R."/>
            <person name="King L.M."/>
            <person name="Leal B."/>
            <person name="Lebow H."/>
            <person name="Lee S."/>
            <person name="LeVan J.M."/>
            <person name="Lewis L.C."/>
            <person name="London P."/>
            <person name="Lorensuhewa L.M."/>
            <person name="Loulseged H."/>
            <person name="Lovett D.A."/>
            <person name="Lucier A."/>
            <person name="Lucier R.L."/>
            <person name="Ma J."/>
            <person name="Madu R.C."/>
            <person name="Mapua P."/>
            <person name="Martindale A.D."/>
            <person name="Martinez E."/>
            <person name="Massey E."/>
            <person name="Mawhiney S."/>
            <person name="Meador M.G."/>
            <person name="Mendez S."/>
            <person name="Mercado C."/>
            <person name="Mercado I.C."/>
            <person name="Merritt C.E."/>
            <person name="Miner Z.L."/>
            <person name="Minja E."/>
            <person name="Mitchell T."/>
            <person name="Mohabbat F."/>
            <person name="Mohabbat K."/>
            <person name="Montgomery B."/>
            <person name="Moore N."/>
            <person name="Morris S."/>
            <person name="Munidasa M."/>
            <person name="Ngo R.N."/>
            <person name="Nguyen N.B."/>
            <person name="Nickerson E."/>
            <person name="Nwaokelemeh O.O."/>
            <person name="Nwokenkwo S."/>
            <person name="Obregon M."/>
            <person name="Oguh M."/>
            <person name="Oragunye N."/>
            <person name="Oviedo R.J."/>
            <person name="Parish B.J."/>
            <person name="Parker D.N."/>
            <person name="Parrish J."/>
            <person name="Parks K.L."/>
            <person name="Paul H.A."/>
            <person name="Payton B.A."/>
            <person name="Perez A."/>
            <person name="Perrin W."/>
            <person name="Pickens A."/>
            <person name="Primus E.L."/>
            <person name="Pu L.-L."/>
            <person name="Puazo M."/>
            <person name="Quiles M.M."/>
            <person name="Quiroz J.B."/>
            <person name="Rabata D."/>
            <person name="Reeves K."/>
            <person name="Ruiz S.J."/>
            <person name="Shao H."/>
            <person name="Sisson I."/>
            <person name="Sonaike T."/>
            <person name="Sorelle R.P."/>
            <person name="Sutton A.E."/>
            <person name="Svatek A.F."/>
            <person name="Svetz L.A."/>
            <person name="Tamerisa K.S."/>
            <person name="Taylor T.R."/>
            <person name="Teague B."/>
            <person name="Thomas N."/>
            <person name="Thorn R.D."/>
            <person name="Trejos Z.Y."/>
            <person name="Trevino B.K."/>
            <person name="Ukegbu O.N."/>
            <person name="Urban J.B."/>
            <person name="Vasquez L.I."/>
            <person name="Vera V.A."/>
            <person name="Villasana D.M."/>
            <person name="Wang L."/>
            <person name="Ward-Moore S."/>
            <person name="Warren J.T."/>
            <person name="Wei X."/>
            <person name="White F."/>
            <person name="Williamson A.L."/>
            <person name="Wleczyk R."/>
            <person name="Wooden H.S."/>
            <person name="Wooden S.H."/>
            <person name="Yen J."/>
            <person name="Yoon L."/>
            <person name="Yoon V."/>
            <person name="Zorrilla S.E."/>
            <person name="Nelson D."/>
            <person name="Kucherlapati R."/>
            <person name="Weinstock G."/>
            <person name="Gibbs R.A."/>
        </authorList>
    </citation>
    <scope>NUCLEOTIDE SEQUENCE [LARGE SCALE GENOMIC DNA]</scope>
</reference>
<reference key="2">
    <citation type="journal article" date="2004" name="Genome Res.">
        <title>The status, quality, and expansion of the NIH full-length cDNA project: the Mammalian Gene Collection (MGC).</title>
        <authorList>
            <consortium name="The MGC Project Team"/>
        </authorList>
    </citation>
    <scope>NUCLEOTIDE SEQUENCE [LARGE SCALE MRNA]</scope>
    <scope>VARIANT ALA-190</scope>
    <source>
        <tissue>Brain</tissue>
    </source>
</reference>
<protein>
    <recommendedName>
        <fullName>Tetraspanin-11</fullName>
        <shortName>Tspan-11</shortName>
    </recommendedName>
</protein>
<gene>
    <name type="primary">TSPAN11</name>
</gene>
<organism>
    <name type="scientific">Homo sapiens</name>
    <name type="common">Human</name>
    <dbReference type="NCBI Taxonomy" id="9606"/>
    <lineage>
        <taxon>Eukaryota</taxon>
        <taxon>Metazoa</taxon>
        <taxon>Chordata</taxon>
        <taxon>Craniata</taxon>
        <taxon>Vertebrata</taxon>
        <taxon>Euteleostomi</taxon>
        <taxon>Mammalia</taxon>
        <taxon>Eutheria</taxon>
        <taxon>Euarchontoglires</taxon>
        <taxon>Primates</taxon>
        <taxon>Haplorrhini</taxon>
        <taxon>Catarrhini</taxon>
        <taxon>Hominidae</taxon>
        <taxon>Homo</taxon>
    </lineage>
</organism>
<name>TSN11_HUMAN</name>
<sequence length="253" mass="28245">MAHYKTEQDDWLIIYLKYLLFVFNFFFWVGGAAVLAVGIWTLVEKSGYLSVLASSTFAASAYILIFAGVLVMVTGFLGFGAILWERKGCLSTYFCLLLVIFLVELVAGVLAHVYYQRLSDELKQHLNRTLAENYGQPGATQITASVDRLQQDFKCCGSNSSADWQHSTYILLREAEGRQVPDSCCKTVVVRCGQRAHPSNIYKVEGGCLTKLEQFLADHLLLMGAVGIGVACLQICGMVLTCCLHQRLQRHFY</sequence>
<accession>A1L157</accession>
<accession>A1L158</accession>
<accession>B2RUX6</accession>
<proteinExistence type="evidence at protein level"/>
<dbReference type="EMBL" id="AC008013">
    <property type="status" value="NOT_ANNOTATED_CDS"/>
    <property type="molecule type" value="Genomic_DNA"/>
</dbReference>
<dbReference type="EMBL" id="AC008150">
    <property type="status" value="NOT_ANNOTATED_CDS"/>
    <property type="molecule type" value="Genomic_DNA"/>
</dbReference>
<dbReference type="EMBL" id="BC127660">
    <property type="protein sequence ID" value="AAI27661.1"/>
    <property type="molecule type" value="mRNA"/>
</dbReference>
<dbReference type="EMBL" id="BC127661">
    <property type="protein sequence ID" value="AAI27662.1"/>
    <property type="molecule type" value="mRNA"/>
</dbReference>
<dbReference type="EMBL" id="BC146917">
    <property type="protein sequence ID" value="AAI46918.1"/>
    <property type="molecule type" value="mRNA"/>
</dbReference>
<dbReference type="EMBL" id="BC146922">
    <property type="protein sequence ID" value="AAI46923.1"/>
    <property type="molecule type" value="mRNA"/>
</dbReference>
<dbReference type="CCDS" id="CCDS31765.1"/>
<dbReference type="RefSeq" id="NP_001073978.1">
    <property type="nucleotide sequence ID" value="NM_001080509.3"/>
</dbReference>
<dbReference type="RefSeq" id="NP_001357231.1">
    <property type="nucleotide sequence ID" value="NM_001370302.1"/>
</dbReference>
<dbReference type="RefSeq" id="XP_011518982.1">
    <property type="nucleotide sequence ID" value="XM_011520680.2"/>
</dbReference>
<dbReference type="SMR" id="A1L157"/>
<dbReference type="BioGRID" id="137636">
    <property type="interactions" value="35"/>
</dbReference>
<dbReference type="FunCoup" id="A1L157">
    <property type="interactions" value="80"/>
</dbReference>
<dbReference type="IntAct" id="A1L157">
    <property type="interactions" value="11"/>
</dbReference>
<dbReference type="STRING" id="9606.ENSP00000261177"/>
<dbReference type="GlyCosmos" id="A1L157">
    <property type="glycosylation" value="1 site, No reported glycans"/>
</dbReference>
<dbReference type="GlyGen" id="A1L157">
    <property type="glycosylation" value="1 site"/>
</dbReference>
<dbReference type="PhosphoSitePlus" id="A1L157"/>
<dbReference type="SwissPalm" id="A1L157"/>
<dbReference type="BioMuta" id="TSPAN11"/>
<dbReference type="jPOST" id="A1L157"/>
<dbReference type="MassIVE" id="A1L157"/>
<dbReference type="PaxDb" id="9606-ENSP00000261177"/>
<dbReference type="PeptideAtlas" id="A1L157"/>
<dbReference type="ProteomicsDB" id="130"/>
<dbReference type="Antibodypedia" id="42427">
    <property type="antibodies" value="30 antibodies from 14 providers"/>
</dbReference>
<dbReference type="DNASU" id="441631"/>
<dbReference type="Ensembl" id="ENST00000261177.10">
    <property type="protein sequence ID" value="ENSP00000261177.9"/>
    <property type="gene ID" value="ENSG00000110900.16"/>
</dbReference>
<dbReference type="Ensembl" id="ENST00000546076.6">
    <property type="protein sequence ID" value="ENSP00000437403.1"/>
    <property type="gene ID" value="ENSG00000110900.16"/>
</dbReference>
<dbReference type="GeneID" id="441631"/>
<dbReference type="KEGG" id="hsa:441631"/>
<dbReference type="MANE-Select" id="ENST00000546076.6">
    <property type="protein sequence ID" value="ENSP00000437403.1"/>
    <property type="RefSeq nucleotide sequence ID" value="NM_001370302.1"/>
    <property type="RefSeq protein sequence ID" value="NP_001357231.1"/>
</dbReference>
<dbReference type="UCSC" id="uc001rjp.4">
    <property type="organism name" value="human"/>
</dbReference>
<dbReference type="AGR" id="HGNC:30795"/>
<dbReference type="CTD" id="441631"/>
<dbReference type="DisGeNET" id="441631"/>
<dbReference type="GeneCards" id="TSPAN11"/>
<dbReference type="HGNC" id="HGNC:30795">
    <property type="gene designation" value="TSPAN11"/>
</dbReference>
<dbReference type="HPA" id="ENSG00000110900">
    <property type="expression patterns" value="Tissue enhanced (intestine)"/>
</dbReference>
<dbReference type="MIM" id="621013">
    <property type="type" value="gene"/>
</dbReference>
<dbReference type="neXtProt" id="NX_A1L157"/>
<dbReference type="OpenTargets" id="ENSG00000110900"/>
<dbReference type="PharmGKB" id="PA142670687"/>
<dbReference type="VEuPathDB" id="HostDB:ENSG00000110900"/>
<dbReference type="eggNOG" id="KOG3882">
    <property type="taxonomic scope" value="Eukaryota"/>
</dbReference>
<dbReference type="GeneTree" id="ENSGT00940000161249"/>
<dbReference type="HOGENOM" id="CLU_055524_5_0_1"/>
<dbReference type="InParanoid" id="A1L157"/>
<dbReference type="OMA" id="HCGQRAH"/>
<dbReference type="OrthoDB" id="438211at2759"/>
<dbReference type="PAN-GO" id="A1L157">
    <property type="GO annotations" value="2 GO annotations based on evolutionary models"/>
</dbReference>
<dbReference type="PhylomeDB" id="A1L157"/>
<dbReference type="TreeFam" id="TF352892"/>
<dbReference type="PathwayCommons" id="A1L157"/>
<dbReference type="SignaLink" id="A1L157"/>
<dbReference type="BioGRID-ORCS" id="441631">
    <property type="hits" value="14 hits in 1150 CRISPR screens"/>
</dbReference>
<dbReference type="ChiTaRS" id="TSPAN11">
    <property type="organism name" value="human"/>
</dbReference>
<dbReference type="GenomeRNAi" id="441631"/>
<dbReference type="Pharos" id="A1L157">
    <property type="development level" value="Tdark"/>
</dbReference>
<dbReference type="PRO" id="PR:A1L157"/>
<dbReference type="Proteomes" id="UP000005640">
    <property type="component" value="Chromosome 12"/>
</dbReference>
<dbReference type="RNAct" id="A1L157">
    <property type="molecule type" value="protein"/>
</dbReference>
<dbReference type="Bgee" id="ENSG00000110900">
    <property type="expression patterns" value="Expressed in tendon of biceps brachii and 126 other cell types or tissues"/>
</dbReference>
<dbReference type="ExpressionAtlas" id="A1L157">
    <property type="expression patterns" value="baseline and differential"/>
</dbReference>
<dbReference type="GO" id="GO:0005886">
    <property type="term" value="C:plasma membrane"/>
    <property type="evidence" value="ECO:0000318"/>
    <property type="project" value="GO_Central"/>
</dbReference>
<dbReference type="CDD" id="cd03155">
    <property type="entry name" value="CD151_like_LEL"/>
    <property type="match status" value="1"/>
</dbReference>
<dbReference type="FunFam" id="1.10.1450.10:FF:000005">
    <property type="entry name" value="Tetraspanin"/>
    <property type="match status" value="1"/>
</dbReference>
<dbReference type="Gene3D" id="1.10.1450.10">
    <property type="entry name" value="Tetraspanin"/>
    <property type="match status" value="1"/>
</dbReference>
<dbReference type="InterPro" id="IPR018499">
    <property type="entry name" value="Tetraspanin/Peripherin"/>
</dbReference>
<dbReference type="InterPro" id="IPR000301">
    <property type="entry name" value="Tetraspanin_animals"/>
</dbReference>
<dbReference type="InterPro" id="IPR008952">
    <property type="entry name" value="Tetraspanin_EC2_sf"/>
</dbReference>
<dbReference type="PANTHER" id="PTHR19282">
    <property type="entry name" value="TETRASPANIN"/>
    <property type="match status" value="1"/>
</dbReference>
<dbReference type="PANTHER" id="PTHR19282:SF198">
    <property type="entry name" value="TETRASPANIN-11"/>
    <property type="match status" value="1"/>
</dbReference>
<dbReference type="Pfam" id="PF00335">
    <property type="entry name" value="Tetraspanin"/>
    <property type="match status" value="1"/>
</dbReference>
<dbReference type="PIRSF" id="PIRSF002419">
    <property type="entry name" value="Tetraspanin"/>
    <property type="match status" value="1"/>
</dbReference>
<dbReference type="PRINTS" id="PR00259">
    <property type="entry name" value="TMFOUR"/>
</dbReference>
<dbReference type="SUPFAM" id="SSF48652">
    <property type="entry name" value="Tetraspanin"/>
    <property type="match status" value="1"/>
</dbReference>
<comment type="subcellular location">
    <subcellularLocation>
        <location evidence="3">Membrane</location>
        <topology evidence="3">Multi-pass membrane protein</topology>
    </subcellularLocation>
</comment>
<comment type="similarity">
    <text evidence="3">Belongs to the tetraspanin (TM4SF) family.</text>
</comment>
<evidence type="ECO:0000255" key="1"/>
<evidence type="ECO:0000269" key="2">
    <source>
    </source>
</evidence>
<evidence type="ECO:0000305" key="3"/>
<feature type="chain" id="PRO_0000311905" description="Tetraspanin-11">
    <location>
        <begin position="1"/>
        <end position="253"/>
    </location>
</feature>
<feature type="transmembrane region" description="Helical" evidence="1">
    <location>
        <begin position="19"/>
        <end position="39"/>
    </location>
</feature>
<feature type="transmembrane region" description="Helical" evidence="1">
    <location>
        <begin position="63"/>
        <end position="83"/>
    </location>
</feature>
<feature type="transmembrane region" description="Helical" evidence="1">
    <location>
        <begin position="93"/>
        <end position="113"/>
    </location>
</feature>
<feature type="transmembrane region" description="Helical" evidence="1">
    <location>
        <begin position="220"/>
        <end position="240"/>
    </location>
</feature>
<feature type="glycosylation site" description="N-linked (GlcNAc...) asparagine" evidence="1">
    <location>
        <position position="127"/>
    </location>
</feature>
<feature type="sequence variant" id="VAR_037337" description="In dbSNP:rs2075333." evidence="2">
    <original>V</original>
    <variation>A</variation>
    <location>
        <position position="190"/>
    </location>
</feature>